<proteinExistence type="inferred from homology"/>
<feature type="chain" id="PRO_0000338709" description="3-demethoxyubiquinol 3-hydroxylase">
    <location>
        <begin position="1"/>
        <end position="215"/>
    </location>
</feature>
<feature type="binding site" evidence="1">
    <location>
        <position position="64"/>
    </location>
    <ligand>
        <name>Fe cation</name>
        <dbReference type="ChEBI" id="CHEBI:24875"/>
        <label>1</label>
    </ligand>
</feature>
<feature type="binding site" evidence="1">
    <location>
        <position position="94"/>
    </location>
    <ligand>
        <name>Fe cation</name>
        <dbReference type="ChEBI" id="CHEBI:24875"/>
        <label>1</label>
    </ligand>
</feature>
<feature type="binding site" evidence="1">
    <location>
        <position position="94"/>
    </location>
    <ligand>
        <name>Fe cation</name>
        <dbReference type="ChEBI" id="CHEBI:24875"/>
        <label>2</label>
    </ligand>
</feature>
<feature type="binding site" evidence="1">
    <location>
        <position position="97"/>
    </location>
    <ligand>
        <name>Fe cation</name>
        <dbReference type="ChEBI" id="CHEBI:24875"/>
        <label>1</label>
    </ligand>
</feature>
<feature type="binding site" evidence="1">
    <location>
        <position position="146"/>
    </location>
    <ligand>
        <name>Fe cation</name>
        <dbReference type="ChEBI" id="CHEBI:24875"/>
        <label>2</label>
    </ligand>
</feature>
<feature type="binding site" evidence="1">
    <location>
        <position position="178"/>
    </location>
    <ligand>
        <name>Fe cation</name>
        <dbReference type="ChEBI" id="CHEBI:24875"/>
        <label>1</label>
    </ligand>
</feature>
<feature type="binding site" evidence="1">
    <location>
        <position position="178"/>
    </location>
    <ligand>
        <name>Fe cation</name>
        <dbReference type="ChEBI" id="CHEBI:24875"/>
        <label>2</label>
    </ligand>
</feature>
<feature type="binding site" evidence="1">
    <location>
        <position position="181"/>
    </location>
    <ligand>
        <name>Fe cation</name>
        <dbReference type="ChEBI" id="CHEBI:24875"/>
        <label>2</label>
    </ligand>
</feature>
<organism>
    <name type="scientific">Pseudomonas aeruginosa (strain UCBPP-PA14)</name>
    <dbReference type="NCBI Taxonomy" id="208963"/>
    <lineage>
        <taxon>Bacteria</taxon>
        <taxon>Pseudomonadati</taxon>
        <taxon>Pseudomonadota</taxon>
        <taxon>Gammaproteobacteria</taxon>
        <taxon>Pseudomonadales</taxon>
        <taxon>Pseudomonadaceae</taxon>
        <taxon>Pseudomonas</taxon>
    </lineage>
</organism>
<protein>
    <recommendedName>
        <fullName evidence="1">3-demethoxyubiquinol 3-hydroxylase</fullName>
        <shortName evidence="1">DMQ hydroxylase</shortName>
        <ecNumber evidence="1">1.14.99.60</ecNumber>
    </recommendedName>
    <alternativeName>
        <fullName evidence="1">2-nonaprenyl-3-methyl-6-methoxy-1,4-benzoquinol hydroxylase</fullName>
    </alternativeName>
</protein>
<evidence type="ECO:0000255" key="1">
    <source>
        <dbReference type="HAMAP-Rule" id="MF_01658"/>
    </source>
</evidence>
<keyword id="KW-1003">Cell membrane</keyword>
<keyword id="KW-0408">Iron</keyword>
<keyword id="KW-0472">Membrane</keyword>
<keyword id="KW-0479">Metal-binding</keyword>
<keyword id="KW-0503">Monooxygenase</keyword>
<keyword id="KW-0560">Oxidoreductase</keyword>
<keyword id="KW-0831">Ubiquinone biosynthesis</keyword>
<accession>Q02TB1</accession>
<dbReference type="EC" id="1.14.99.60" evidence="1"/>
<dbReference type="EMBL" id="CP000438">
    <property type="protein sequence ID" value="ABJ15616.1"/>
    <property type="molecule type" value="Genomic_DNA"/>
</dbReference>
<dbReference type="RefSeq" id="WP_003085224.1">
    <property type="nucleotide sequence ID" value="NZ_CP034244.1"/>
</dbReference>
<dbReference type="SMR" id="Q02TB1"/>
<dbReference type="KEGG" id="pau:PA14_08400"/>
<dbReference type="PseudoCAP" id="PA14_08400"/>
<dbReference type="HOGENOM" id="CLU_088601_0_0_6"/>
<dbReference type="BioCyc" id="PAER208963:G1G74-696-MONOMER"/>
<dbReference type="UniPathway" id="UPA00232"/>
<dbReference type="Proteomes" id="UP000000653">
    <property type="component" value="Chromosome"/>
</dbReference>
<dbReference type="GO" id="GO:0005886">
    <property type="term" value="C:plasma membrane"/>
    <property type="evidence" value="ECO:0007669"/>
    <property type="project" value="UniProtKB-SubCell"/>
</dbReference>
<dbReference type="GO" id="GO:0008682">
    <property type="term" value="F:3-demethoxyubiquinol 3-hydroxylase activity"/>
    <property type="evidence" value="ECO:0007669"/>
    <property type="project" value="UniProtKB-EC"/>
</dbReference>
<dbReference type="GO" id="GO:0046872">
    <property type="term" value="F:metal ion binding"/>
    <property type="evidence" value="ECO:0007669"/>
    <property type="project" value="UniProtKB-KW"/>
</dbReference>
<dbReference type="GO" id="GO:0006744">
    <property type="term" value="P:ubiquinone biosynthetic process"/>
    <property type="evidence" value="ECO:0007669"/>
    <property type="project" value="UniProtKB-UniRule"/>
</dbReference>
<dbReference type="CDD" id="cd01042">
    <property type="entry name" value="DMQH"/>
    <property type="match status" value="1"/>
</dbReference>
<dbReference type="FunFam" id="1.20.1260.10:FF:000013">
    <property type="entry name" value="2-nonaprenyl-3-methyl-6-methoxy-1,4-benzoquinol hydroxylase"/>
    <property type="match status" value="1"/>
</dbReference>
<dbReference type="Gene3D" id="1.20.1260.10">
    <property type="match status" value="1"/>
</dbReference>
<dbReference type="HAMAP" id="MF_01658">
    <property type="entry name" value="COQ7"/>
    <property type="match status" value="1"/>
</dbReference>
<dbReference type="InterPro" id="IPR047809">
    <property type="entry name" value="COQ7_proteobact"/>
</dbReference>
<dbReference type="InterPro" id="IPR012347">
    <property type="entry name" value="Ferritin-like"/>
</dbReference>
<dbReference type="InterPro" id="IPR009078">
    <property type="entry name" value="Ferritin-like_SF"/>
</dbReference>
<dbReference type="InterPro" id="IPR011566">
    <property type="entry name" value="Ubq_synth_Coq7"/>
</dbReference>
<dbReference type="NCBIfam" id="NF033656">
    <property type="entry name" value="DMQ_monoox_COQ7"/>
    <property type="match status" value="1"/>
</dbReference>
<dbReference type="PANTHER" id="PTHR11237:SF4">
    <property type="entry name" value="5-DEMETHOXYUBIQUINONE HYDROXYLASE, MITOCHONDRIAL"/>
    <property type="match status" value="1"/>
</dbReference>
<dbReference type="PANTHER" id="PTHR11237">
    <property type="entry name" value="COENZYME Q10 BIOSYNTHESIS PROTEIN 7"/>
    <property type="match status" value="1"/>
</dbReference>
<dbReference type="Pfam" id="PF03232">
    <property type="entry name" value="COQ7"/>
    <property type="match status" value="1"/>
</dbReference>
<dbReference type="SUPFAM" id="SSF47240">
    <property type="entry name" value="Ferritin-like"/>
    <property type="match status" value="1"/>
</dbReference>
<reference key="1">
    <citation type="journal article" date="2006" name="Genome Biol.">
        <title>Genomic analysis reveals that Pseudomonas aeruginosa virulence is combinatorial.</title>
        <authorList>
            <person name="Lee D.G."/>
            <person name="Urbach J.M."/>
            <person name="Wu G."/>
            <person name="Liberati N.T."/>
            <person name="Feinbaum R.L."/>
            <person name="Miyata S."/>
            <person name="Diggins L.T."/>
            <person name="He J."/>
            <person name="Saucier M."/>
            <person name="Deziel E."/>
            <person name="Friedman L."/>
            <person name="Li L."/>
            <person name="Grills G."/>
            <person name="Montgomery K."/>
            <person name="Kucherlapati R."/>
            <person name="Rahme L.G."/>
            <person name="Ausubel F.M."/>
        </authorList>
    </citation>
    <scope>NUCLEOTIDE SEQUENCE [LARGE SCALE GENOMIC DNA]</scope>
    <source>
        <strain>UCBPP-PA14</strain>
    </source>
</reference>
<gene>
    <name evidence="1" type="primary">coq7</name>
    <name type="ordered locus">PA14_08400</name>
</gene>
<sequence length="215" mass="23644">MSADRHYSPIDRFLLQADSALRTLLPFSGQPARPSPAIVEPDGELSEEDTRHIAGLMRINHTGEVCAQALYQGQSLTAKLPEVREAMEEAAEEEIDHLAWCEQRIRQLGSRPSVLNPIFYGLSFGVGAAAGLVSDRVSLGFVAATEDQVCKHLDEHLAQIPQEDRKSRAILEQMRIDEEQHSSNALAAGGLRFPAPVKLGMSLLAKVMTKSTYRI</sequence>
<comment type="function">
    <text evidence="1">Catalyzes the hydroxylation of 2-nonaprenyl-3-methyl-6-methoxy-1,4-benzoquinol during ubiquinone biosynthesis.</text>
</comment>
<comment type="catalytic activity">
    <reaction evidence="1">
        <text>a 5-methoxy-2-methyl-3-(all-trans-polyprenyl)benzene-1,4-diol + AH2 + O2 = a 3-demethylubiquinol + A + H2O</text>
        <dbReference type="Rhea" id="RHEA:50908"/>
        <dbReference type="Rhea" id="RHEA-COMP:10859"/>
        <dbReference type="Rhea" id="RHEA-COMP:10914"/>
        <dbReference type="ChEBI" id="CHEBI:13193"/>
        <dbReference type="ChEBI" id="CHEBI:15377"/>
        <dbReference type="ChEBI" id="CHEBI:15379"/>
        <dbReference type="ChEBI" id="CHEBI:17499"/>
        <dbReference type="ChEBI" id="CHEBI:84167"/>
        <dbReference type="ChEBI" id="CHEBI:84422"/>
        <dbReference type="EC" id="1.14.99.60"/>
    </reaction>
</comment>
<comment type="cofactor">
    <cofactor evidence="1">
        <name>Fe cation</name>
        <dbReference type="ChEBI" id="CHEBI:24875"/>
    </cofactor>
    <text evidence="1">Binds 2 iron ions per subunit.</text>
</comment>
<comment type="pathway">
    <text evidence="1">Cofactor biosynthesis; ubiquinone biosynthesis.</text>
</comment>
<comment type="subcellular location">
    <subcellularLocation>
        <location evidence="1">Cell membrane</location>
        <topology evidence="1">Peripheral membrane protein</topology>
    </subcellularLocation>
</comment>
<comment type="similarity">
    <text evidence="1">Belongs to the COQ7 family.</text>
</comment>
<name>COQ7_PSEAB</name>